<reference key="1">
    <citation type="journal article" date="1990" name="Nucleic Acids Res.">
        <title>Molecular cloning of a cDNA for the ubiquitin gene of Lupinus polyphyllus.</title>
        <authorList>
            <person name="Perrey R."/>
            <person name="Warskulat U."/>
            <person name="Wink M."/>
        </authorList>
    </citation>
    <scope>NUCLEOTIDE SEQUENCE [MRNA]</scope>
    <source>
        <tissue>Leaf</tissue>
    </source>
</reference>
<sequence length="77" mass="8672">MQIFVKTLTGKTITLEVESSDTIDNVKAKIQDKEGIPPDQQRLIFAGKQLEDGRTLADYNIQKESTLHLVLRLRGGF</sequence>
<protein>
    <recommendedName>
        <fullName>Ubiquitin</fullName>
    </recommendedName>
</protein>
<dbReference type="EMBL" id="X54381">
    <property type="protein sequence ID" value="CAA38256.1"/>
    <property type="molecule type" value="mRNA"/>
</dbReference>
<dbReference type="PIR" id="S12161">
    <property type="entry name" value="S12161"/>
</dbReference>
<dbReference type="SMR" id="P69317"/>
<dbReference type="GO" id="GO:0005737">
    <property type="term" value="C:cytoplasm"/>
    <property type="evidence" value="ECO:0007669"/>
    <property type="project" value="UniProtKB-SubCell"/>
</dbReference>
<dbReference type="GO" id="GO:0005634">
    <property type="term" value="C:nucleus"/>
    <property type="evidence" value="ECO:0007669"/>
    <property type="project" value="UniProtKB-SubCell"/>
</dbReference>
<dbReference type="GO" id="GO:0003729">
    <property type="term" value="F:mRNA binding"/>
    <property type="evidence" value="ECO:0007669"/>
    <property type="project" value="UniProtKB-ARBA"/>
</dbReference>
<dbReference type="CDD" id="cd01803">
    <property type="entry name" value="Ubl_ubiquitin"/>
    <property type="match status" value="1"/>
</dbReference>
<dbReference type="FunFam" id="3.10.20.90:FF:000016">
    <property type="entry name" value="Polyubiquitin 3"/>
    <property type="match status" value="1"/>
</dbReference>
<dbReference type="Gene3D" id="3.10.20.90">
    <property type="entry name" value="Phosphatidylinositol 3-kinase Catalytic Subunit, Chain A, domain 1"/>
    <property type="match status" value="1"/>
</dbReference>
<dbReference type="InterPro" id="IPR000626">
    <property type="entry name" value="Ubiquitin-like_dom"/>
</dbReference>
<dbReference type="InterPro" id="IPR029071">
    <property type="entry name" value="Ubiquitin-like_domsf"/>
</dbReference>
<dbReference type="InterPro" id="IPR019954">
    <property type="entry name" value="Ubiquitin_CS"/>
</dbReference>
<dbReference type="InterPro" id="IPR019956">
    <property type="entry name" value="Ubiquitin_dom"/>
</dbReference>
<dbReference type="InterPro" id="IPR050158">
    <property type="entry name" value="Ubiquitin_ubiquitin-like"/>
</dbReference>
<dbReference type="PANTHER" id="PTHR10666">
    <property type="entry name" value="UBIQUITIN"/>
    <property type="match status" value="1"/>
</dbReference>
<dbReference type="Pfam" id="PF00240">
    <property type="entry name" value="ubiquitin"/>
    <property type="match status" value="1"/>
</dbReference>
<dbReference type="PRINTS" id="PR00348">
    <property type="entry name" value="UBIQUITIN"/>
</dbReference>
<dbReference type="SMART" id="SM00213">
    <property type="entry name" value="UBQ"/>
    <property type="match status" value="1"/>
</dbReference>
<dbReference type="SUPFAM" id="SSF54236">
    <property type="entry name" value="Ubiquitin-like"/>
    <property type="match status" value="1"/>
</dbReference>
<dbReference type="PROSITE" id="PS00299">
    <property type="entry name" value="UBIQUITIN_1"/>
    <property type="match status" value="1"/>
</dbReference>
<dbReference type="PROSITE" id="PS50053">
    <property type="entry name" value="UBIQUITIN_2"/>
    <property type="match status" value="1"/>
</dbReference>
<feature type="chain" id="PRO_0000114844" description="Ubiquitin">
    <location>
        <begin position="1"/>
        <end position="76"/>
    </location>
</feature>
<feature type="propeptide" id="PRO_0000396430">
    <location>
        <position position="77"/>
    </location>
</feature>
<feature type="domain" description="Ubiquitin-like" evidence="2">
    <location>
        <begin position="1"/>
        <end position="76"/>
    </location>
</feature>
<feature type="cross-link" description="Glycyl lysine isopeptide (Lys-Gly) (interchain with G-Cter in ubiquitin)" evidence="1">
    <location>
        <position position="48"/>
    </location>
</feature>
<feature type="cross-link" description="Glycyl lysine isopeptide (Gly-Lys) (interchain with K-? in acceptor proteins)" evidence="2">
    <location>
        <position position="76"/>
    </location>
</feature>
<evidence type="ECO:0000250" key="1"/>
<evidence type="ECO:0000255" key="2">
    <source>
        <dbReference type="PROSITE-ProRule" id="PRU00214"/>
    </source>
</evidence>
<evidence type="ECO:0000305" key="3"/>
<name>UBIQ_LUPPO</name>
<comment type="function">
    <text evidence="1">Ubiquitin exists either covalently attached to another protein, or free (unanchored). When covalently bound, it is conjugated to target proteins via an isopeptide bond either as a monomer (monoubiquitin), a polymer linked via different Lys residues of the ubiquitin (polyubiquitin chains) or a linear polymer linked via the initiator Met of the ubiquitin (linear polyubiquitin chains). Polyubiquitin chains, when attached to a target protein, have different functions depending on the Lys residue of the ubiquitin that is linked: Lys-48-linked is involved in protein degradation via the proteasome. Linear polymer chains formed via attachment by the initiator Met lead to cell signaling. Ubiquitin is usually conjugated to Lys residues of target proteins, however, in rare cases, conjugation to Cys or Ser residues has been observed. When polyubiquitin is free (unanchored-polyubiquitin), it also has distinct roles, such as in activation of protein kinases, and in signaling (By similarity).</text>
</comment>
<comment type="subcellular location">
    <subcellularLocation>
        <location evidence="1">Cytoplasm</location>
    </subcellularLocation>
    <subcellularLocation>
        <location evidence="1">Nucleus</location>
    </subcellularLocation>
</comment>
<comment type="similarity">
    <text evidence="3">Belongs to the ubiquitin family.</text>
</comment>
<proteinExistence type="inferred from homology"/>
<keyword id="KW-0963">Cytoplasm</keyword>
<keyword id="KW-1017">Isopeptide bond</keyword>
<keyword id="KW-0539">Nucleus</keyword>
<keyword id="KW-0832">Ubl conjugation</keyword>
<organism>
    <name type="scientific">Lupinus polyphyllus</name>
    <name type="common">Large-leaved lupine</name>
    <dbReference type="NCBI Taxonomy" id="3874"/>
    <lineage>
        <taxon>Eukaryota</taxon>
        <taxon>Viridiplantae</taxon>
        <taxon>Streptophyta</taxon>
        <taxon>Embryophyta</taxon>
        <taxon>Tracheophyta</taxon>
        <taxon>Spermatophyta</taxon>
        <taxon>Magnoliopsida</taxon>
        <taxon>eudicotyledons</taxon>
        <taxon>Gunneridae</taxon>
        <taxon>Pentapetalae</taxon>
        <taxon>rosids</taxon>
        <taxon>fabids</taxon>
        <taxon>Fabales</taxon>
        <taxon>Fabaceae</taxon>
        <taxon>Papilionoideae</taxon>
        <taxon>50 kb inversion clade</taxon>
        <taxon>genistoids sensu lato</taxon>
        <taxon>core genistoids</taxon>
        <taxon>Genisteae</taxon>
        <taxon>Lupinus</taxon>
    </lineage>
</organism>
<accession>P69317</accession>
<accession>O82079</accession>
<accession>P03993</accession>